<keyword id="KW-0025">Alternative splicing</keyword>
<keyword id="KW-0130">Cell adhesion</keyword>
<keyword id="KW-1003">Cell membrane</keyword>
<keyword id="KW-1015">Disulfide bond</keyword>
<keyword id="KW-0325">Glycoprotein</keyword>
<keyword id="KW-0393">Immunoglobulin domain</keyword>
<keyword id="KW-0472">Membrane</keyword>
<keyword id="KW-0488">Methylation</keyword>
<keyword id="KW-0524">Neurogenesis</keyword>
<keyword id="KW-0597">Phosphoprotein</keyword>
<keyword id="KW-0628">Postsynaptic cell membrane</keyword>
<keyword id="KW-1267">Proteomics identification</keyword>
<keyword id="KW-1185">Reference proteome</keyword>
<keyword id="KW-0677">Repeat</keyword>
<keyword id="KW-0732">Signal</keyword>
<keyword id="KW-0770">Synapse</keyword>
<keyword id="KW-0812">Transmembrane</keyword>
<keyword id="KW-1133">Transmembrane helix</keyword>
<feature type="signal peptide" evidence="3">
    <location>
        <begin position="1"/>
        <end position="20"/>
    </location>
</feature>
<feature type="chain" id="PRO_0000306110" description="Protein turtle homolog B">
    <location>
        <begin position="21"/>
        <end position="1349"/>
    </location>
</feature>
<feature type="topological domain" description="Extracellular" evidence="3">
    <location>
        <begin position="21"/>
        <end position="722"/>
    </location>
</feature>
<feature type="transmembrane region" description="Helical" evidence="3">
    <location>
        <begin position="723"/>
        <end position="743"/>
    </location>
</feature>
<feature type="topological domain" description="Cytoplasmic" evidence="3">
    <location>
        <begin position="744"/>
        <end position="1349"/>
    </location>
</feature>
<feature type="domain" description="Ig-like 1">
    <location>
        <begin position="24"/>
        <end position="129"/>
    </location>
</feature>
<feature type="domain" description="Ig-like 2">
    <location>
        <begin position="139"/>
        <end position="226"/>
    </location>
</feature>
<feature type="domain" description="Ig-like 3">
    <location>
        <begin position="228"/>
        <end position="320"/>
    </location>
</feature>
<feature type="domain" description="Ig-like 4">
    <location>
        <begin position="324"/>
        <end position="415"/>
    </location>
</feature>
<feature type="domain" description="Ig-like 5">
    <location>
        <begin position="420"/>
        <end position="504"/>
    </location>
</feature>
<feature type="domain" description="Fibronectin type-III 1" evidence="5">
    <location>
        <begin position="512"/>
        <end position="604"/>
    </location>
</feature>
<feature type="domain" description="Fibronectin type-III 2" evidence="5">
    <location>
        <begin position="614"/>
        <end position="708"/>
    </location>
</feature>
<feature type="region of interest" description="Disordered" evidence="6">
    <location>
        <begin position="758"/>
        <end position="817"/>
    </location>
</feature>
<feature type="region of interest" description="Disordered" evidence="6">
    <location>
        <begin position="911"/>
        <end position="1081"/>
    </location>
</feature>
<feature type="region of interest" description="Disordered" evidence="6">
    <location>
        <begin position="1099"/>
        <end position="1349"/>
    </location>
</feature>
<feature type="compositionally biased region" description="Polar residues" evidence="6">
    <location>
        <begin position="911"/>
        <end position="921"/>
    </location>
</feature>
<feature type="compositionally biased region" description="Low complexity" evidence="6">
    <location>
        <begin position="985"/>
        <end position="998"/>
    </location>
</feature>
<feature type="compositionally biased region" description="Polar residues" evidence="6">
    <location>
        <begin position="1018"/>
        <end position="1033"/>
    </location>
</feature>
<feature type="compositionally biased region" description="Polar residues" evidence="6">
    <location>
        <begin position="1129"/>
        <end position="1141"/>
    </location>
</feature>
<feature type="compositionally biased region" description="Polar residues" evidence="6">
    <location>
        <begin position="1199"/>
        <end position="1214"/>
    </location>
</feature>
<feature type="compositionally biased region" description="Low complexity" evidence="6">
    <location>
        <begin position="1251"/>
        <end position="1271"/>
    </location>
</feature>
<feature type="compositionally biased region" description="Pro residues" evidence="6">
    <location>
        <begin position="1283"/>
        <end position="1292"/>
    </location>
</feature>
<feature type="modified residue" description="Phosphoserine" evidence="1">
    <location>
        <position position="775"/>
    </location>
</feature>
<feature type="modified residue" description="Phosphoserine" evidence="2">
    <location>
        <position position="783"/>
    </location>
</feature>
<feature type="modified residue" description="Phosphoserine" evidence="2">
    <location>
        <position position="794"/>
    </location>
</feature>
<feature type="modified residue" description="Omega-N-methylarginine" evidence="2">
    <location>
        <position position="1136"/>
    </location>
</feature>
<feature type="modified residue" description="Phosphoserine" evidence="1">
    <location>
        <position position="1207"/>
    </location>
</feature>
<feature type="modified residue" description="Phosphoserine" evidence="2">
    <location>
        <position position="1215"/>
    </location>
</feature>
<feature type="glycosylation site" description="N-linked (GlcNAc...) asparagine" evidence="3">
    <location>
        <position position="241"/>
    </location>
</feature>
<feature type="glycosylation site" description="N-linked (GlcNAc...) asparagine" evidence="3">
    <location>
        <position position="258"/>
    </location>
</feature>
<feature type="glycosylation site" description="N-linked (GlcNAc...) asparagine" evidence="3">
    <location>
        <position position="624"/>
    </location>
</feature>
<feature type="disulfide bond" evidence="4">
    <location>
        <begin position="45"/>
        <end position="113"/>
    </location>
</feature>
<feature type="disulfide bond" evidence="4">
    <location>
        <begin position="161"/>
        <end position="208"/>
    </location>
</feature>
<feature type="disulfide bond" evidence="4">
    <location>
        <begin position="250"/>
        <end position="303"/>
    </location>
</feature>
<feature type="disulfide bond" evidence="4">
    <location>
        <begin position="346"/>
        <end position="397"/>
    </location>
</feature>
<feature type="disulfide bond" evidence="4">
    <location>
        <begin position="442"/>
        <end position="488"/>
    </location>
</feature>
<feature type="splice variant" id="VSP_054730" description="In isoform 2." evidence="8">
    <original>KLQRDRPAPATSPPERALSKL</original>
    <variation>TLPPAPGNAAAPERLEALKYQRIKKPKKSSKGSSKSKKRSDDSASQTQQLPNSQVLWPDEAVCLRKKKRHSRPDPFARLSDLCHRQLPEDQTAILNSVDHDDPGHATLL</variation>
    <location>
        <begin position="1329"/>
        <end position="1349"/>
    </location>
</feature>
<feature type="sequence variant" id="VAR_076999" description="In dbSNP:rs77432041." evidence="7">
    <original>T</original>
    <variation>M</variation>
    <location>
        <position position="178"/>
    </location>
</feature>
<feature type="sequence variant" id="VAR_077000" description="In dbSNP:rs369063193." evidence="7">
    <original>E</original>
    <variation>K</variation>
    <location>
        <position position="268"/>
    </location>
</feature>
<feature type="sequence conflict" description="In Ref. 2; BAA82982." evidence="8" ref="2">
    <original>Q</original>
    <variation>R</variation>
    <location>
        <position position="1331"/>
    </location>
</feature>
<organism>
    <name type="scientific">Homo sapiens</name>
    <name type="common">Human</name>
    <dbReference type="NCBI Taxonomy" id="9606"/>
    <lineage>
        <taxon>Eukaryota</taxon>
        <taxon>Metazoa</taxon>
        <taxon>Chordata</taxon>
        <taxon>Craniata</taxon>
        <taxon>Vertebrata</taxon>
        <taxon>Euteleostomi</taxon>
        <taxon>Mammalia</taxon>
        <taxon>Eutheria</taxon>
        <taxon>Euarchontoglires</taxon>
        <taxon>Primates</taxon>
        <taxon>Haplorrhini</taxon>
        <taxon>Catarrhini</taxon>
        <taxon>Hominidae</taxon>
        <taxon>Homo</taxon>
    </lineage>
</organism>
<proteinExistence type="evidence at protein level"/>
<name>TUTLB_HUMAN</name>
<protein>
    <recommendedName>
        <fullName>Protein turtle homolog B</fullName>
    </recommendedName>
    <alternativeName>
        <fullName>Immunoglobulin superfamily member 9B</fullName>
        <shortName>IgSF9B</shortName>
    </alternativeName>
</protein>
<dbReference type="EMBL" id="AP000911">
    <property type="status" value="NOT_ANNOTATED_CDS"/>
    <property type="molecule type" value="Genomic_DNA"/>
</dbReference>
<dbReference type="EMBL" id="AP001979">
    <property type="status" value="NOT_ANNOTATED_CDS"/>
    <property type="molecule type" value="Genomic_DNA"/>
</dbReference>
<dbReference type="EMBL" id="AB028953">
    <property type="protein sequence ID" value="BAA82982.1"/>
    <property type="molecule type" value="mRNA"/>
</dbReference>
<dbReference type="CCDS" id="CCDS61010.1">
    <molecule id="Q9UPX0-2"/>
</dbReference>
<dbReference type="RefSeq" id="NP_001264214.1">
    <molecule id="Q9UPX0-2"/>
    <property type="nucleotide sequence ID" value="NM_001277285.4"/>
</dbReference>
<dbReference type="SMR" id="Q9UPX0"/>
<dbReference type="BioGRID" id="116644">
    <property type="interactions" value="8"/>
</dbReference>
<dbReference type="FunCoup" id="Q9UPX0">
    <property type="interactions" value="134"/>
</dbReference>
<dbReference type="IntAct" id="Q9UPX0">
    <property type="interactions" value="3"/>
</dbReference>
<dbReference type="MINT" id="Q9UPX0"/>
<dbReference type="STRING" id="9606.ENSP00000436552"/>
<dbReference type="GlyCosmos" id="Q9UPX0">
    <property type="glycosylation" value="3 sites, No reported glycans"/>
</dbReference>
<dbReference type="GlyGen" id="Q9UPX0">
    <property type="glycosylation" value="7 sites, 1 O-linked glycan (3 sites)"/>
</dbReference>
<dbReference type="iPTMnet" id="Q9UPX0"/>
<dbReference type="PhosphoSitePlus" id="Q9UPX0"/>
<dbReference type="SwissPalm" id="Q9UPX0"/>
<dbReference type="BioMuta" id="IGSF9B"/>
<dbReference type="DMDM" id="158706512"/>
<dbReference type="jPOST" id="Q9UPX0"/>
<dbReference type="MassIVE" id="Q9UPX0"/>
<dbReference type="PaxDb" id="9606-ENSP00000436552"/>
<dbReference type="PeptideAtlas" id="Q9UPX0"/>
<dbReference type="ProteomicsDB" id="34118"/>
<dbReference type="ProteomicsDB" id="85465">
    <molecule id="Q9UPX0-1"/>
</dbReference>
<dbReference type="Antibodypedia" id="2253">
    <property type="antibodies" value="24 antibodies from 11 providers"/>
</dbReference>
<dbReference type="DNASU" id="22997"/>
<dbReference type="Ensembl" id="ENST00000321016.12">
    <molecule id="Q9UPX0-1"/>
    <property type="protein sequence ID" value="ENSP00000317980.8"/>
    <property type="gene ID" value="ENSG00000080854.16"/>
</dbReference>
<dbReference type="Ensembl" id="ENST00000533871.8">
    <molecule id="Q9UPX0-2"/>
    <property type="protein sequence ID" value="ENSP00000436552.2"/>
    <property type="gene ID" value="ENSG00000080854.16"/>
</dbReference>
<dbReference type="GeneID" id="22997"/>
<dbReference type="KEGG" id="hsa:22997"/>
<dbReference type="MANE-Select" id="ENST00000533871.8">
    <molecule id="Q9UPX0-2"/>
    <property type="protein sequence ID" value="ENSP00000436552.2"/>
    <property type="RefSeq nucleotide sequence ID" value="NM_001277285.4"/>
    <property type="RefSeq protein sequence ID" value="NP_001264214.1"/>
</dbReference>
<dbReference type="UCSC" id="uc031qfh.2">
    <molecule id="Q9UPX0-1"/>
    <property type="organism name" value="human"/>
</dbReference>
<dbReference type="AGR" id="HGNC:32326"/>
<dbReference type="CTD" id="22997"/>
<dbReference type="DisGeNET" id="22997"/>
<dbReference type="GeneCards" id="IGSF9B"/>
<dbReference type="HGNC" id="HGNC:32326">
    <property type="gene designation" value="IGSF9B"/>
</dbReference>
<dbReference type="HPA" id="ENSG00000080854">
    <property type="expression patterns" value="Low tissue specificity"/>
</dbReference>
<dbReference type="MIM" id="613773">
    <property type="type" value="gene"/>
</dbReference>
<dbReference type="neXtProt" id="NX_Q9UPX0"/>
<dbReference type="OpenTargets" id="ENSG00000080854"/>
<dbReference type="PharmGKB" id="PA142671660"/>
<dbReference type="VEuPathDB" id="HostDB:ENSG00000080854"/>
<dbReference type="eggNOG" id="KOG2408">
    <property type="taxonomic scope" value="Eukaryota"/>
</dbReference>
<dbReference type="eggNOG" id="KOG3510">
    <property type="taxonomic scope" value="Eukaryota"/>
</dbReference>
<dbReference type="GeneTree" id="ENSGT00940000155900"/>
<dbReference type="HOGENOM" id="CLU_008169_0_0_1"/>
<dbReference type="InParanoid" id="Q9UPX0"/>
<dbReference type="OMA" id="TPKWQDK"/>
<dbReference type="OrthoDB" id="6234674at2759"/>
<dbReference type="PAN-GO" id="Q9UPX0">
    <property type="GO annotations" value="1 GO annotation based on evolutionary models"/>
</dbReference>
<dbReference type="PhylomeDB" id="Q9UPX0"/>
<dbReference type="TreeFam" id="TF326128"/>
<dbReference type="PathwayCommons" id="Q9UPX0"/>
<dbReference type="SignaLink" id="Q9UPX0"/>
<dbReference type="BioGRID-ORCS" id="22997">
    <property type="hits" value="7 hits in 1007 CRISPR screens"/>
</dbReference>
<dbReference type="ChiTaRS" id="IGSF9B">
    <property type="organism name" value="human"/>
</dbReference>
<dbReference type="GenomeRNAi" id="22997"/>
<dbReference type="Pharos" id="Q9UPX0">
    <property type="development level" value="Tdark"/>
</dbReference>
<dbReference type="PRO" id="PR:Q9UPX0"/>
<dbReference type="Proteomes" id="UP000005640">
    <property type="component" value="Chromosome 11"/>
</dbReference>
<dbReference type="RNAct" id="Q9UPX0">
    <property type="molecule type" value="protein"/>
</dbReference>
<dbReference type="Bgee" id="ENSG00000080854">
    <property type="expression patterns" value="Expressed in right hemisphere of cerebellum and 132 other cell types or tissues"/>
</dbReference>
<dbReference type="ExpressionAtlas" id="Q9UPX0">
    <property type="expression patterns" value="baseline and differential"/>
</dbReference>
<dbReference type="GO" id="GO:0043005">
    <property type="term" value="C:neuron projection"/>
    <property type="evidence" value="ECO:0000318"/>
    <property type="project" value="GO_Central"/>
</dbReference>
<dbReference type="GO" id="GO:0014069">
    <property type="term" value="C:postsynaptic density"/>
    <property type="evidence" value="ECO:0007669"/>
    <property type="project" value="UniProtKB-SubCell"/>
</dbReference>
<dbReference type="GO" id="GO:0045211">
    <property type="term" value="C:postsynaptic membrane"/>
    <property type="evidence" value="ECO:0007669"/>
    <property type="project" value="UniProtKB-SubCell"/>
</dbReference>
<dbReference type="GO" id="GO:0007155">
    <property type="term" value="P:cell adhesion"/>
    <property type="evidence" value="ECO:0007669"/>
    <property type="project" value="UniProtKB-KW"/>
</dbReference>
<dbReference type="GO" id="GO:0007399">
    <property type="term" value="P:nervous system development"/>
    <property type="evidence" value="ECO:0007669"/>
    <property type="project" value="UniProtKB-KW"/>
</dbReference>
<dbReference type="CDD" id="cd00063">
    <property type="entry name" value="FN3"/>
    <property type="match status" value="2"/>
</dbReference>
<dbReference type="CDD" id="cd00096">
    <property type="entry name" value="Ig"/>
    <property type="match status" value="2"/>
</dbReference>
<dbReference type="FunFam" id="2.60.40.10:FF:000272">
    <property type="entry name" value="Immunoglobulin superfamily member 9B"/>
    <property type="match status" value="1"/>
</dbReference>
<dbReference type="FunFam" id="2.60.40.10:FF:000323">
    <property type="entry name" value="Immunoglobulin superfamily member 9B"/>
    <property type="match status" value="1"/>
</dbReference>
<dbReference type="FunFam" id="2.60.40.10:FF:000389">
    <property type="entry name" value="Immunoglobulin superfamily member 9B"/>
    <property type="match status" value="1"/>
</dbReference>
<dbReference type="FunFam" id="2.60.40.10:FF:000531">
    <property type="entry name" value="Immunoglobulin superfamily member 9B"/>
    <property type="match status" value="1"/>
</dbReference>
<dbReference type="FunFam" id="2.60.40.10:FF:000226">
    <property type="entry name" value="protein turtle homolog B"/>
    <property type="match status" value="1"/>
</dbReference>
<dbReference type="FunFam" id="2.60.40.10:FF:000245">
    <property type="entry name" value="protein turtle homolog B isoform X2"/>
    <property type="match status" value="1"/>
</dbReference>
<dbReference type="FunFam" id="2.60.40.10:FF:000321">
    <property type="entry name" value="protein turtle homolog B isoform X2"/>
    <property type="match status" value="1"/>
</dbReference>
<dbReference type="Gene3D" id="2.60.40.10">
    <property type="entry name" value="Immunoglobulins"/>
    <property type="match status" value="7"/>
</dbReference>
<dbReference type="InterPro" id="IPR003961">
    <property type="entry name" value="FN3_dom"/>
</dbReference>
<dbReference type="InterPro" id="IPR036116">
    <property type="entry name" value="FN3_sf"/>
</dbReference>
<dbReference type="InterPro" id="IPR007110">
    <property type="entry name" value="Ig-like_dom"/>
</dbReference>
<dbReference type="InterPro" id="IPR036179">
    <property type="entry name" value="Ig-like_dom_sf"/>
</dbReference>
<dbReference type="InterPro" id="IPR013783">
    <property type="entry name" value="Ig-like_fold"/>
</dbReference>
<dbReference type="InterPro" id="IPR003599">
    <property type="entry name" value="Ig_sub"/>
</dbReference>
<dbReference type="InterPro" id="IPR003598">
    <property type="entry name" value="Ig_sub2"/>
</dbReference>
<dbReference type="InterPro" id="IPR013106">
    <property type="entry name" value="Ig_V-set"/>
</dbReference>
<dbReference type="InterPro" id="IPR051170">
    <property type="entry name" value="Neural/epithelial_adhesion"/>
</dbReference>
<dbReference type="PANTHER" id="PTHR12231">
    <property type="entry name" value="CTX-RELATED TYPE I TRANSMEMBRANE PROTEIN"/>
    <property type="match status" value="1"/>
</dbReference>
<dbReference type="PANTHER" id="PTHR12231:SF240">
    <property type="entry name" value="PROTEIN TURTLE HOMOLOG B"/>
    <property type="match status" value="1"/>
</dbReference>
<dbReference type="Pfam" id="PF00041">
    <property type="entry name" value="fn3"/>
    <property type="match status" value="2"/>
</dbReference>
<dbReference type="Pfam" id="PF13895">
    <property type="entry name" value="Ig_2"/>
    <property type="match status" value="1"/>
</dbReference>
<dbReference type="Pfam" id="PF13927">
    <property type="entry name" value="Ig_3"/>
    <property type="match status" value="4"/>
</dbReference>
<dbReference type="SMART" id="SM00060">
    <property type="entry name" value="FN3"/>
    <property type="match status" value="3"/>
</dbReference>
<dbReference type="SMART" id="SM00409">
    <property type="entry name" value="IG"/>
    <property type="match status" value="5"/>
</dbReference>
<dbReference type="SMART" id="SM00408">
    <property type="entry name" value="IGc2"/>
    <property type="match status" value="5"/>
</dbReference>
<dbReference type="SMART" id="SM00406">
    <property type="entry name" value="IGv"/>
    <property type="match status" value="3"/>
</dbReference>
<dbReference type="SUPFAM" id="SSF49265">
    <property type="entry name" value="Fibronectin type III"/>
    <property type="match status" value="1"/>
</dbReference>
<dbReference type="SUPFAM" id="SSF48726">
    <property type="entry name" value="Immunoglobulin"/>
    <property type="match status" value="5"/>
</dbReference>
<dbReference type="PROSITE" id="PS50853">
    <property type="entry name" value="FN3"/>
    <property type="match status" value="2"/>
</dbReference>
<dbReference type="PROSITE" id="PS50835">
    <property type="entry name" value="IG_LIKE"/>
    <property type="match status" value="5"/>
</dbReference>
<gene>
    <name type="primary">IGSF9B</name>
    <name type="synonym">KIAA1030</name>
</gene>
<evidence type="ECO:0000250" key="1">
    <source>
        <dbReference type="UniProtKB" id="D3ZB51"/>
    </source>
</evidence>
<evidence type="ECO:0000250" key="2">
    <source>
        <dbReference type="UniProtKB" id="E9PZ19"/>
    </source>
</evidence>
<evidence type="ECO:0000255" key="3"/>
<evidence type="ECO:0000255" key="4">
    <source>
        <dbReference type="PROSITE-ProRule" id="PRU00114"/>
    </source>
</evidence>
<evidence type="ECO:0000255" key="5">
    <source>
        <dbReference type="PROSITE-ProRule" id="PRU00316"/>
    </source>
</evidence>
<evidence type="ECO:0000256" key="6">
    <source>
        <dbReference type="SAM" id="MobiDB-lite"/>
    </source>
</evidence>
<evidence type="ECO:0000269" key="7">
    <source>
    </source>
</evidence>
<evidence type="ECO:0000305" key="8"/>
<reference key="1">
    <citation type="journal article" date="2006" name="Nature">
        <title>Human chromosome 11 DNA sequence and analysis including novel gene identification.</title>
        <authorList>
            <person name="Taylor T.D."/>
            <person name="Noguchi H."/>
            <person name="Totoki Y."/>
            <person name="Toyoda A."/>
            <person name="Kuroki Y."/>
            <person name="Dewar K."/>
            <person name="Lloyd C."/>
            <person name="Itoh T."/>
            <person name="Takeda T."/>
            <person name="Kim D.-W."/>
            <person name="She X."/>
            <person name="Barlow K.F."/>
            <person name="Bloom T."/>
            <person name="Bruford E."/>
            <person name="Chang J.L."/>
            <person name="Cuomo C.A."/>
            <person name="Eichler E."/>
            <person name="FitzGerald M.G."/>
            <person name="Jaffe D.B."/>
            <person name="LaButti K."/>
            <person name="Nicol R."/>
            <person name="Park H.-S."/>
            <person name="Seaman C."/>
            <person name="Sougnez C."/>
            <person name="Yang X."/>
            <person name="Zimmer A.R."/>
            <person name="Zody M.C."/>
            <person name="Birren B.W."/>
            <person name="Nusbaum C."/>
            <person name="Fujiyama A."/>
            <person name="Hattori M."/>
            <person name="Rogers J."/>
            <person name="Lander E.S."/>
            <person name="Sakaki Y."/>
        </authorList>
    </citation>
    <scope>NUCLEOTIDE SEQUENCE [LARGE SCALE GENOMIC DNA]</scope>
</reference>
<reference key="2">
    <citation type="journal article" date="1999" name="DNA Res.">
        <title>Prediction of the coding sequences of unidentified human genes. XIV. The complete sequences of 100 new cDNA clones from brain which code for large proteins in vitro.</title>
        <authorList>
            <person name="Kikuno R."/>
            <person name="Nagase T."/>
            <person name="Ishikawa K."/>
            <person name="Hirosawa M."/>
            <person name="Miyajima N."/>
            <person name="Tanaka A."/>
            <person name="Kotani H."/>
            <person name="Nomura N."/>
            <person name="Ohara O."/>
        </authorList>
    </citation>
    <scope>NUCLEOTIDE SEQUENCE [LARGE SCALE MRNA] OF 585-1349 (ISOFORM 1)</scope>
    <source>
        <tissue>Brain</tissue>
    </source>
</reference>
<reference key="3">
    <citation type="journal article" date="2016" name="Ann. Neurol.">
        <title>ADSSL1 mutation relevant to autosomal recessive adolescent onset distal myopathy.</title>
        <authorList>
            <person name="Park H.J."/>
            <person name="Hong Y.B."/>
            <person name="Choi Y.C."/>
            <person name="Lee J."/>
            <person name="Kim E.J."/>
            <person name="Lee J.S."/>
            <person name="Mo W.M."/>
            <person name="Ki S.M."/>
            <person name="Kim H.I."/>
            <person name="Kim H.J."/>
            <person name="Hyun Y.S."/>
            <person name="Hong H.D."/>
            <person name="Nam K."/>
            <person name="Jung S.C."/>
            <person name="Kim S.B."/>
            <person name="Kim S.H."/>
            <person name="Kim D.H."/>
            <person name="Oh K.W."/>
            <person name="Kim S.H."/>
            <person name="Yoo J.H."/>
            <person name="Lee J.E."/>
            <person name="Chung K.W."/>
            <person name="Choi B.O."/>
        </authorList>
    </citation>
    <scope>VARIANTS MET-178 AND LYS-268</scope>
</reference>
<sequence length="1349" mass="147089">MIWYVATFIASVIGTRGLAAEGAHGLREEPEFVTARAGESVVLRCDVIHPVTGQPPPYVVEWFKFGVPIPIFIKFGYYPPHVDPEYAGRASLHDKASLRLEQVRSEDQGWYECKVLMLDQQYDTFHNGSWVHLTINAPPTFTETPPQYIEAKEGGSITMTCTAFGNPKPIVTWLKEGTLLGASGKYQVSDGSLTVTSVSREDRGAYTCRAYSIQGEAVHTTHLLVQGPPFIVSPPENITVNISQDALLTCRAEAYPGNLTYTWYWQDENVYFQNDLKLRVRILIDGTLIIFRVKPEDSGKYTCVPSNSLGRSPSASAYLTVQYPARVLNMPPVIYVPVGIHGYIRCPVDAEPPATVVKWNKDGRPLQVEKNLGWTLMEDGSIRIEEATEEALGTYTCVPYNTLGTMGQSAPARLVLKDPPYFTVLPGWEYRQEAGRELLIPCAAAGDPFPVITWRKVGKPSRSKHSALPSGSLQFRALSKEDHGEWECVATNVVTSITASTHLTVIGTSPHAPGSVRVQVSMTTANVSWEPGYDGGYEQTFSVWMKRAQFGPHDWLSLPVPPGPSWLLVDTLEPETAYQFSVLAQNKLGTSAFSEVVTVNTLAFPITTPEPLVLVTPPRCLIANRTQQGVLLSWLPPANHSFPIDRYIMEFRVAERWELLDDGIPGTEGEFFAKDLSQDTWYEFRVLAVMQDLISEPSNIAGVSSTDIFPQPDLTEDGLARPVLAGIVATICFLAAAILFSTLAACFVNKQRKRKLKRKKDPPLSITHCRKSLESPLSSGKVSPESIRTLRAPSESSDDQGQPAAKRMLSPTREKELSLYKKTKRAISSKKYSVAKAEAEAEATTPIELISRGPDGRFVMDPAEMEPSLKSRRIEGFPFAEETDMYPEFRQSDEENEDPLVPTSVAALKSQLTPLSSSQESYLPPPAYSPRFQPRGLEGPGGLEGRLQATGQARPPAPRPFHHGQYYGYLSSSSPGEVEPPPFYVPEVGSPLSSVMSSPPLPTEGPFGHPTIPEENGENASNSTLPLTQTPTGGRSPEPWGRPEFPFGGLETPAMMFPHQLPPCDVPESLQPKAGLPRGLPPTSLQVPAAYPGILSLEAPKGWAGKSPGRGPVPAPPAAKWQDRPMQPLVSQGQLRHTSQGMGIPVLPYPEPAEPGAHGGPSTFGLDTRWYEPQPRPRPSPRQARRAEPSLHQVVLQPSRLSPLTQSPLSSRTGSPELAARARPRPGLLQQAEMSEITLQPPAAVSFSRKSTPSTGSPSQSSRSGSPSYRPAMGFTTLATGYPSPPPGPAPAGPGDSLDVFGQTPSPRRTGEELLRPETPPPTLPTSGKLQRDRPAPATSPPERALSKL</sequence>
<accession>Q9UPX0</accession>
<accession>G5EA26</accession>
<comment type="function">
    <text evidence="1 2">Transmembrane protein which is abundantly expressed in interneurons, where it may regulate inhibitory synapse development. May mediate homophilic cell adhesion.</text>
</comment>
<comment type="subunit">
    <text evidence="1">Found in a complex with MAGI2 and NLGN2, where it interacts with MAGI2 (via PDZ 5 and PDZ 6 domains).</text>
</comment>
<comment type="subcellular location">
    <subcellularLocation>
        <location evidence="1">Postsynaptic cell membrane</location>
        <topology evidence="3">Single-pass type I membrane protein</topology>
    </subcellularLocation>
    <subcellularLocation>
        <location evidence="1">Postsynaptic density</location>
    </subcellularLocation>
</comment>
<comment type="alternative products">
    <event type="alternative splicing"/>
    <isoform>
        <id>Q9UPX0-1</id>
        <name>1</name>
        <sequence type="displayed"/>
    </isoform>
    <isoform>
        <id>Q9UPX0-2</id>
        <name>2</name>
        <sequence type="described" ref="VSP_054730"/>
    </isoform>
</comment>
<comment type="PTM">
    <text evidence="1">N-glycosylated and sialylated. Not significantly O-glycosylated.</text>
</comment>
<comment type="similarity">
    <text evidence="8">Belongs to the immunoglobulin superfamily. Turtle family.</text>
</comment>